<name>GLPE_SALPA</name>
<sequence>MEQFECITVEEAYQKLHQGAAVLVDIRDPQSYAMGHAPQAFHLTNDTLGAFMREHGFDTAVMVMCYHGNSSKGAAQYLLQQGYDAVYSIDGGFEAWHRRFPADVANGA</sequence>
<evidence type="ECO:0000255" key="1">
    <source>
        <dbReference type="HAMAP-Rule" id="MF_01009"/>
    </source>
</evidence>
<reference key="1">
    <citation type="journal article" date="2004" name="Nat. Genet.">
        <title>Comparison of genome degradation in Paratyphi A and Typhi, human-restricted serovars of Salmonella enterica that cause typhoid.</title>
        <authorList>
            <person name="McClelland M."/>
            <person name="Sanderson K.E."/>
            <person name="Clifton S.W."/>
            <person name="Latreille P."/>
            <person name="Porwollik S."/>
            <person name="Sabo A."/>
            <person name="Meyer R."/>
            <person name="Bieri T."/>
            <person name="Ozersky P."/>
            <person name="McLellan M."/>
            <person name="Harkins C.R."/>
            <person name="Wang C."/>
            <person name="Nguyen C."/>
            <person name="Berghoff A."/>
            <person name="Elliott G."/>
            <person name="Kohlberg S."/>
            <person name="Strong C."/>
            <person name="Du F."/>
            <person name="Carter J."/>
            <person name="Kremizki C."/>
            <person name="Layman D."/>
            <person name="Leonard S."/>
            <person name="Sun H."/>
            <person name="Fulton L."/>
            <person name="Nash W."/>
            <person name="Miner T."/>
            <person name="Minx P."/>
            <person name="Delehaunty K."/>
            <person name="Fronick C."/>
            <person name="Magrini V."/>
            <person name="Nhan M."/>
            <person name="Warren W."/>
            <person name="Florea L."/>
            <person name="Spieth J."/>
            <person name="Wilson R.K."/>
        </authorList>
    </citation>
    <scope>NUCLEOTIDE SEQUENCE [LARGE SCALE GENOMIC DNA]</scope>
    <source>
        <strain>ATCC 9150 / SARB42</strain>
    </source>
</reference>
<protein>
    <recommendedName>
        <fullName evidence="1">Thiosulfate sulfurtransferase GlpE</fullName>
        <ecNumber evidence="1">2.8.1.1</ecNumber>
    </recommendedName>
</protein>
<organism>
    <name type="scientific">Salmonella paratyphi A (strain ATCC 9150 / SARB42)</name>
    <dbReference type="NCBI Taxonomy" id="295319"/>
    <lineage>
        <taxon>Bacteria</taxon>
        <taxon>Pseudomonadati</taxon>
        <taxon>Pseudomonadota</taxon>
        <taxon>Gammaproteobacteria</taxon>
        <taxon>Enterobacterales</taxon>
        <taxon>Enterobacteriaceae</taxon>
        <taxon>Salmonella</taxon>
    </lineage>
</organism>
<dbReference type="EC" id="2.8.1.1" evidence="1"/>
<dbReference type="EMBL" id="CP000026">
    <property type="protein sequence ID" value="AAV79196.1"/>
    <property type="molecule type" value="Genomic_DNA"/>
</dbReference>
<dbReference type="RefSeq" id="WP_000434523.1">
    <property type="nucleotide sequence ID" value="NC_006511.1"/>
</dbReference>
<dbReference type="SMR" id="Q5PLZ7"/>
<dbReference type="KEGG" id="spt:SPA3383"/>
<dbReference type="HOGENOM" id="CLU_089574_14_0_6"/>
<dbReference type="Proteomes" id="UP000008185">
    <property type="component" value="Chromosome"/>
</dbReference>
<dbReference type="GO" id="GO:0005737">
    <property type="term" value="C:cytoplasm"/>
    <property type="evidence" value="ECO:0007669"/>
    <property type="project" value="UniProtKB-SubCell"/>
</dbReference>
<dbReference type="GO" id="GO:0004792">
    <property type="term" value="F:thiosulfate-cyanide sulfurtransferase activity"/>
    <property type="evidence" value="ECO:0007669"/>
    <property type="project" value="UniProtKB-UniRule"/>
</dbReference>
<dbReference type="GO" id="GO:0006071">
    <property type="term" value="P:glycerol metabolic process"/>
    <property type="evidence" value="ECO:0007669"/>
    <property type="project" value="UniProtKB-UniRule"/>
</dbReference>
<dbReference type="CDD" id="cd01444">
    <property type="entry name" value="GlpE_ST"/>
    <property type="match status" value="1"/>
</dbReference>
<dbReference type="FunFam" id="3.40.250.10:FF:000007">
    <property type="entry name" value="Thiosulfate sulfurtransferase GlpE"/>
    <property type="match status" value="1"/>
</dbReference>
<dbReference type="Gene3D" id="3.40.250.10">
    <property type="entry name" value="Rhodanese-like domain"/>
    <property type="match status" value="1"/>
</dbReference>
<dbReference type="HAMAP" id="MF_01009">
    <property type="entry name" value="Thiosulf_sulfurtr"/>
    <property type="match status" value="1"/>
</dbReference>
<dbReference type="InterPro" id="IPR050229">
    <property type="entry name" value="GlpE_sulfurtransferase"/>
</dbReference>
<dbReference type="InterPro" id="IPR001763">
    <property type="entry name" value="Rhodanese-like_dom"/>
</dbReference>
<dbReference type="InterPro" id="IPR036873">
    <property type="entry name" value="Rhodanese-like_dom_sf"/>
</dbReference>
<dbReference type="InterPro" id="IPR023695">
    <property type="entry name" value="Thiosulf_sulfurTrfase"/>
</dbReference>
<dbReference type="NCBIfam" id="NF001195">
    <property type="entry name" value="PRK00162.1"/>
    <property type="match status" value="1"/>
</dbReference>
<dbReference type="PANTHER" id="PTHR43031">
    <property type="entry name" value="FAD-DEPENDENT OXIDOREDUCTASE"/>
    <property type="match status" value="1"/>
</dbReference>
<dbReference type="PANTHER" id="PTHR43031:SF6">
    <property type="entry name" value="THIOSULFATE SULFURTRANSFERASE GLPE"/>
    <property type="match status" value="1"/>
</dbReference>
<dbReference type="Pfam" id="PF00581">
    <property type="entry name" value="Rhodanese"/>
    <property type="match status" value="1"/>
</dbReference>
<dbReference type="SMART" id="SM00450">
    <property type="entry name" value="RHOD"/>
    <property type="match status" value="1"/>
</dbReference>
<dbReference type="SUPFAM" id="SSF52821">
    <property type="entry name" value="Rhodanese/Cell cycle control phosphatase"/>
    <property type="match status" value="1"/>
</dbReference>
<dbReference type="PROSITE" id="PS50206">
    <property type="entry name" value="RHODANESE_3"/>
    <property type="match status" value="1"/>
</dbReference>
<comment type="function">
    <text evidence="1">Transferase that catalyzes the transfer of sulfur from thiosulfate to thiophilic acceptors such as cyanide or dithiols. May function in a CysM-independent thiosulfate assimilation pathway by catalyzing the conversion of thiosulfate to sulfite, which can then be used for L-cysteine biosynthesis.</text>
</comment>
<comment type="catalytic activity">
    <reaction evidence="1">
        <text>thiosulfate + hydrogen cyanide = thiocyanate + sulfite + 2 H(+)</text>
        <dbReference type="Rhea" id="RHEA:16881"/>
        <dbReference type="ChEBI" id="CHEBI:15378"/>
        <dbReference type="ChEBI" id="CHEBI:17359"/>
        <dbReference type="ChEBI" id="CHEBI:18022"/>
        <dbReference type="ChEBI" id="CHEBI:18407"/>
        <dbReference type="ChEBI" id="CHEBI:33542"/>
        <dbReference type="EC" id="2.8.1.1"/>
    </reaction>
</comment>
<comment type="catalytic activity">
    <reaction evidence="1">
        <text>thiosulfate + [thioredoxin]-dithiol = [thioredoxin]-disulfide + hydrogen sulfide + sulfite + 2 H(+)</text>
        <dbReference type="Rhea" id="RHEA:83859"/>
        <dbReference type="Rhea" id="RHEA-COMP:10698"/>
        <dbReference type="Rhea" id="RHEA-COMP:10700"/>
        <dbReference type="ChEBI" id="CHEBI:15378"/>
        <dbReference type="ChEBI" id="CHEBI:17359"/>
        <dbReference type="ChEBI" id="CHEBI:29919"/>
        <dbReference type="ChEBI" id="CHEBI:29950"/>
        <dbReference type="ChEBI" id="CHEBI:33542"/>
        <dbReference type="ChEBI" id="CHEBI:50058"/>
    </reaction>
</comment>
<comment type="subcellular location">
    <subcellularLocation>
        <location evidence="1">Cytoplasm</location>
    </subcellularLocation>
</comment>
<comment type="similarity">
    <text evidence="1">Belongs to the GlpE family.</text>
</comment>
<gene>
    <name evidence="1" type="primary">glpE</name>
    <name type="ordered locus">SPA3383</name>
</gene>
<keyword id="KW-0963">Cytoplasm</keyword>
<keyword id="KW-0808">Transferase</keyword>
<proteinExistence type="inferred from homology"/>
<feature type="chain" id="PRO_0000200562" description="Thiosulfate sulfurtransferase GlpE">
    <location>
        <begin position="1"/>
        <end position="108"/>
    </location>
</feature>
<feature type="domain" description="Rhodanese" evidence="1">
    <location>
        <begin position="17"/>
        <end position="105"/>
    </location>
</feature>
<feature type="active site" description="Cysteine persulfide intermediate" evidence="1">
    <location>
        <position position="65"/>
    </location>
</feature>
<accession>Q5PLZ7</accession>